<name>GPD1_CANGA</name>
<evidence type="ECO:0000250" key="1"/>
<evidence type="ECO:0000305" key="2"/>
<keyword id="KW-0520">NAD</keyword>
<keyword id="KW-0560">Oxidoreductase</keyword>
<keyword id="KW-1185">Reference proteome</keyword>
<comment type="catalytic activity">
    <reaction>
        <text>sn-glycerol 3-phosphate + NAD(+) = dihydroxyacetone phosphate + NADH + H(+)</text>
        <dbReference type="Rhea" id="RHEA:11092"/>
        <dbReference type="ChEBI" id="CHEBI:15378"/>
        <dbReference type="ChEBI" id="CHEBI:57540"/>
        <dbReference type="ChEBI" id="CHEBI:57597"/>
        <dbReference type="ChEBI" id="CHEBI:57642"/>
        <dbReference type="ChEBI" id="CHEBI:57945"/>
        <dbReference type="EC" id="1.1.1.8"/>
    </reaction>
</comment>
<comment type="similarity">
    <text evidence="2">Belongs to the NAD-dependent glycerol-3-phosphate dehydrogenase family.</text>
</comment>
<reference key="1">
    <citation type="journal article" date="2004" name="Nature">
        <title>Genome evolution in yeasts.</title>
        <authorList>
            <person name="Dujon B."/>
            <person name="Sherman D."/>
            <person name="Fischer G."/>
            <person name="Durrens P."/>
            <person name="Casaregola S."/>
            <person name="Lafontaine I."/>
            <person name="de Montigny J."/>
            <person name="Marck C."/>
            <person name="Neuveglise C."/>
            <person name="Talla E."/>
            <person name="Goffard N."/>
            <person name="Frangeul L."/>
            <person name="Aigle M."/>
            <person name="Anthouard V."/>
            <person name="Babour A."/>
            <person name="Barbe V."/>
            <person name="Barnay S."/>
            <person name="Blanchin S."/>
            <person name="Beckerich J.-M."/>
            <person name="Beyne E."/>
            <person name="Bleykasten C."/>
            <person name="Boisrame A."/>
            <person name="Boyer J."/>
            <person name="Cattolico L."/>
            <person name="Confanioleri F."/>
            <person name="de Daruvar A."/>
            <person name="Despons L."/>
            <person name="Fabre E."/>
            <person name="Fairhead C."/>
            <person name="Ferry-Dumazet H."/>
            <person name="Groppi A."/>
            <person name="Hantraye F."/>
            <person name="Hennequin C."/>
            <person name="Jauniaux N."/>
            <person name="Joyet P."/>
            <person name="Kachouri R."/>
            <person name="Kerrest A."/>
            <person name="Koszul R."/>
            <person name="Lemaire M."/>
            <person name="Lesur I."/>
            <person name="Ma L."/>
            <person name="Muller H."/>
            <person name="Nicaud J.-M."/>
            <person name="Nikolski M."/>
            <person name="Oztas S."/>
            <person name="Ozier-Kalogeropoulos O."/>
            <person name="Pellenz S."/>
            <person name="Potier S."/>
            <person name="Richard G.-F."/>
            <person name="Straub M.-L."/>
            <person name="Suleau A."/>
            <person name="Swennen D."/>
            <person name="Tekaia F."/>
            <person name="Wesolowski-Louvel M."/>
            <person name="Westhof E."/>
            <person name="Wirth B."/>
            <person name="Zeniou-Meyer M."/>
            <person name="Zivanovic Y."/>
            <person name="Bolotin-Fukuhara M."/>
            <person name="Thierry A."/>
            <person name="Bouchier C."/>
            <person name="Caudron B."/>
            <person name="Scarpelli C."/>
            <person name="Gaillardin C."/>
            <person name="Weissenbach J."/>
            <person name="Wincker P."/>
            <person name="Souciet J.-L."/>
        </authorList>
    </citation>
    <scope>NUCLEOTIDE SEQUENCE [LARGE SCALE GENOMIC DNA]</scope>
    <source>
        <strain>ATCC 2001 / BCRC 20586 / JCM 3761 / NBRC 0622 / NRRL Y-65 / CBS 138</strain>
    </source>
</reference>
<accession>Q6FN96</accession>
<dbReference type="EC" id="1.1.1.8"/>
<dbReference type="EMBL" id="CR380957">
    <property type="protein sequence ID" value="CAG61259.1"/>
    <property type="molecule type" value="Genomic_DNA"/>
</dbReference>
<dbReference type="RefSeq" id="XP_448298.1">
    <property type="nucleotide sequence ID" value="XM_448298.1"/>
</dbReference>
<dbReference type="SMR" id="Q6FN96"/>
<dbReference type="FunCoup" id="Q6FN96">
    <property type="interactions" value="650"/>
</dbReference>
<dbReference type="STRING" id="284593.Q6FN96"/>
<dbReference type="EnsemblFungi" id="CAGL0K01683g-T">
    <property type="protein sequence ID" value="CAGL0K01683g-T-p1"/>
    <property type="gene ID" value="CAGL0K01683g"/>
</dbReference>
<dbReference type="GeneID" id="2890024"/>
<dbReference type="KEGG" id="cgr:2890024"/>
<dbReference type="CGD" id="CAL0133949">
    <property type="gene designation" value="GPD1"/>
</dbReference>
<dbReference type="VEuPathDB" id="FungiDB:CAGL0K01683g"/>
<dbReference type="eggNOG" id="KOG2711">
    <property type="taxonomic scope" value="Eukaryota"/>
</dbReference>
<dbReference type="HOGENOM" id="CLU_033449_2_4_1"/>
<dbReference type="InParanoid" id="Q6FN96"/>
<dbReference type="OMA" id="NRMFGNM"/>
<dbReference type="Proteomes" id="UP000002428">
    <property type="component" value="Chromosome K"/>
</dbReference>
<dbReference type="GO" id="GO:0005829">
    <property type="term" value="C:cytosol"/>
    <property type="evidence" value="ECO:0007669"/>
    <property type="project" value="TreeGrafter"/>
</dbReference>
<dbReference type="GO" id="GO:0005634">
    <property type="term" value="C:nucleus"/>
    <property type="evidence" value="ECO:0007669"/>
    <property type="project" value="TreeGrafter"/>
</dbReference>
<dbReference type="GO" id="GO:0141152">
    <property type="term" value="F:glycerol-3-phosphate dehydrogenase (NAD+) activity"/>
    <property type="evidence" value="ECO:0007669"/>
    <property type="project" value="UniProtKB-EC"/>
</dbReference>
<dbReference type="GO" id="GO:0051287">
    <property type="term" value="F:NAD binding"/>
    <property type="evidence" value="ECO:0007669"/>
    <property type="project" value="InterPro"/>
</dbReference>
<dbReference type="GO" id="GO:0042803">
    <property type="term" value="F:protein homodimerization activity"/>
    <property type="evidence" value="ECO:0007669"/>
    <property type="project" value="InterPro"/>
</dbReference>
<dbReference type="GO" id="GO:0005975">
    <property type="term" value="P:carbohydrate metabolic process"/>
    <property type="evidence" value="ECO:0007669"/>
    <property type="project" value="InterPro"/>
</dbReference>
<dbReference type="GO" id="GO:0046168">
    <property type="term" value="P:glycerol-3-phosphate catabolic process"/>
    <property type="evidence" value="ECO:0007669"/>
    <property type="project" value="InterPro"/>
</dbReference>
<dbReference type="FunFam" id="1.10.1040.10:FF:000004">
    <property type="entry name" value="Glycerol-3-phosphate dehydrogenase [NAD(+)]"/>
    <property type="match status" value="1"/>
</dbReference>
<dbReference type="FunFam" id="3.40.50.720:FF:000294">
    <property type="entry name" value="Glycerol-3-phosphate dehydrogenase [NAD(+)]"/>
    <property type="match status" value="1"/>
</dbReference>
<dbReference type="Gene3D" id="1.10.1040.10">
    <property type="entry name" value="N-(1-d-carboxylethyl)-l-norvaline Dehydrogenase, domain 2"/>
    <property type="match status" value="1"/>
</dbReference>
<dbReference type="Gene3D" id="3.40.50.720">
    <property type="entry name" value="NAD(P)-binding Rossmann-like Domain"/>
    <property type="match status" value="1"/>
</dbReference>
<dbReference type="InterPro" id="IPR008927">
    <property type="entry name" value="6-PGluconate_DH-like_C_sf"/>
</dbReference>
<dbReference type="InterPro" id="IPR013328">
    <property type="entry name" value="6PGD_dom2"/>
</dbReference>
<dbReference type="InterPro" id="IPR006168">
    <property type="entry name" value="G3P_DH_NAD-dep"/>
</dbReference>
<dbReference type="InterPro" id="IPR006109">
    <property type="entry name" value="G3P_DH_NAD-dep_C"/>
</dbReference>
<dbReference type="InterPro" id="IPR017751">
    <property type="entry name" value="G3P_DH_NAD-dep_euk"/>
</dbReference>
<dbReference type="InterPro" id="IPR011128">
    <property type="entry name" value="G3P_DH_NAD-dep_N"/>
</dbReference>
<dbReference type="InterPro" id="IPR036291">
    <property type="entry name" value="NAD(P)-bd_dom_sf"/>
</dbReference>
<dbReference type="NCBIfam" id="TIGR03376">
    <property type="entry name" value="glycerol3P_DH"/>
    <property type="match status" value="1"/>
</dbReference>
<dbReference type="PANTHER" id="PTHR11728">
    <property type="entry name" value="GLYCEROL-3-PHOSPHATE DEHYDROGENASE"/>
    <property type="match status" value="1"/>
</dbReference>
<dbReference type="PANTHER" id="PTHR11728:SF8">
    <property type="entry name" value="GLYCEROL-3-PHOSPHATE DEHYDROGENASE [NAD(+)]-RELATED"/>
    <property type="match status" value="1"/>
</dbReference>
<dbReference type="Pfam" id="PF07479">
    <property type="entry name" value="NAD_Gly3P_dh_C"/>
    <property type="match status" value="1"/>
</dbReference>
<dbReference type="Pfam" id="PF01210">
    <property type="entry name" value="NAD_Gly3P_dh_N"/>
    <property type="match status" value="1"/>
</dbReference>
<dbReference type="PIRSF" id="PIRSF000114">
    <property type="entry name" value="Glycerol-3-P_dh"/>
    <property type="match status" value="1"/>
</dbReference>
<dbReference type="PRINTS" id="PR00077">
    <property type="entry name" value="GPDHDRGNASE"/>
</dbReference>
<dbReference type="SUPFAM" id="SSF48179">
    <property type="entry name" value="6-phosphogluconate dehydrogenase C-terminal domain-like"/>
    <property type="match status" value="1"/>
</dbReference>
<dbReference type="SUPFAM" id="SSF51735">
    <property type="entry name" value="NAD(P)-binding Rossmann-fold domains"/>
    <property type="match status" value="1"/>
</dbReference>
<dbReference type="PROSITE" id="PS00957">
    <property type="entry name" value="NAD_G3PDH"/>
    <property type="match status" value="1"/>
</dbReference>
<protein>
    <recommendedName>
        <fullName>Glycerol-3-phosphate dehydrogenase [NAD(+)] 1</fullName>
        <ecNumber>1.1.1.8</ecNumber>
    </recommendedName>
</protein>
<proteinExistence type="inferred from homology"/>
<organism>
    <name type="scientific">Candida glabrata (strain ATCC 2001 / BCRC 20586 / JCM 3761 / NBRC 0622 / NRRL Y-65 / CBS 138)</name>
    <name type="common">Yeast</name>
    <name type="synonym">Nakaseomyces glabratus</name>
    <dbReference type="NCBI Taxonomy" id="284593"/>
    <lineage>
        <taxon>Eukaryota</taxon>
        <taxon>Fungi</taxon>
        <taxon>Dikarya</taxon>
        <taxon>Ascomycota</taxon>
        <taxon>Saccharomycotina</taxon>
        <taxon>Saccharomycetes</taxon>
        <taxon>Saccharomycetales</taxon>
        <taxon>Saccharomycetaceae</taxon>
        <taxon>Nakaseomyces</taxon>
    </lineage>
</organism>
<feature type="chain" id="PRO_0000138086" description="Glycerol-3-phosphate dehydrogenase [NAD(+)] 1">
    <location>
        <begin position="1"/>
        <end position="400"/>
    </location>
</feature>
<feature type="active site" description="Proton acceptor" evidence="1">
    <location>
        <position position="254"/>
    </location>
</feature>
<feature type="binding site" evidence="1">
    <location>
        <begin position="50"/>
        <end position="55"/>
    </location>
    <ligand>
        <name>NAD(+)</name>
        <dbReference type="ChEBI" id="CHEBI:57540"/>
    </ligand>
</feature>
<feature type="binding site" evidence="1">
    <location>
        <position position="138"/>
    </location>
    <ligand>
        <name>NAD(+)</name>
        <dbReference type="ChEBI" id="CHEBI:57540"/>
    </ligand>
</feature>
<feature type="binding site" evidence="1">
    <location>
        <position position="161"/>
    </location>
    <ligand>
        <name>NAD(+)</name>
        <dbReference type="ChEBI" id="CHEBI:57540"/>
    </ligand>
</feature>
<feature type="binding site" evidence="1">
    <location>
        <position position="161"/>
    </location>
    <ligand>
        <name>substrate</name>
    </ligand>
</feature>
<feature type="binding site" evidence="1">
    <location>
        <position position="194"/>
    </location>
    <ligand>
        <name>NAD(+)</name>
        <dbReference type="ChEBI" id="CHEBI:57540"/>
    </ligand>
</feature>
<feature type="binding site" evidence="1">
    <location>
        <begin position="319"/>
        <end position="320"/>
    </location>
    <ligand>
        <name>substrate</name>
    </ligand>
</feature>
<feature type="binding site" evidence="1">
    <location>
        <position position="319"/>
    </location>
    <ligand>
        <name>NAD(+)</name>
        <dbReference type="ChEBI" id="CHEBI:57540"/>
    </ligand>
</feature>
<feature type="binding site" evidence="1">
    <location>
        <position position="348"/>
    </location>
    <ligand>
        <name>NAD(+)</name>
        <dbReference type="ChEBI" id="CHEBI:57540"/>
    </ligand>
</feature>
<sequence>MSNSAAGRLNQTSHILNESIKNDDISLRRSQPSTTSLQALEHPFKVTVIGSGNWGTTIAKVVAENTALNPHLFVSRVDMWVFEEKIDGKNLTEIINEQHENVKYLPDIKLPENLVANPNLIDSVKGADILIFNIPHQFLPRIVSNLKNHVGPHVRAISCLKGFEVGKKGVQLLSSYVTDELGIQCGALSGANLAPEVAKEHWSETTVAYHIPKDFRGEGKDVDHKLLKALFHRPYFHVNVIEDVAGISIAGALKNVVALGCGFVEGLGWGNNAAAAIQRVGLGEIIKFGQMFFPESRVQTYYQESAGVADLITTCSGGRNVRVAKHMAKTGKSALDAEKELLNGQSAQGIITCKEVHEWLETCEMTHEFPLFEAVYQIVYNNVPMKNLPDMIEELECIAD</sequence>
<gene>
    <name type="primary">GPD1</name>
    <name type="ordered locus">CAGL0K01683g</name>
</gene>